<gene>
    <name evidence="2" type="primary">L</name>
    <name evidence="6" type="ORF">AVI29_00002</name>
</gene>
<evidence type="ECO:0000250" key="1">
    <source>
        <dbReference type="UniProtKB" id="A2SZS3"/>
    </source>
</evidence>
<evidence type="ECO:0000255" key="2">
    <source>
        <dbReference type="HAMAP-Rule" id="MF_04086"/>
    </source>
</evidence>
<evidence type="ECO:0000269" key="3">
    <source>
    </source>
</evidence>
<evidence type="ECO:0000305" key="4">
    <source>
    </source>
</evidence>
<evidence type="ECO:0000312" key="5">
    <source>
        <dbReference type="EMBL" id="AAT48998.1"/>
    </source>
</evidence>
<evidence type="ECO:0000312" key="6">
    <source>
        <dbReference type="EMBL" id="AMZ00375.1"/>
    </source>
</evidence>
<evidence type="ECO:0000312" key="7">
    <source>
        <dbReference type="EMBL" id="APT69523.1"/>
    </source>
</evidence>
<evidence type="ECO:0000312" key="8">
    <source>
        <dbReference type="EMBL" id="APT69533.1"/>
    </source>
</evidence>
<evidence type="ECO:0007744" key="9">
    <source>
        <dbReference type="PDB" id="5IZH"/>
    </source>
</evidence>
<evidence type="ECO:0007744" key="10">
    <source>
        <dbReference type="PDB" id="5J1N"/>
    </source>
</evidence>
<evidence type="ECO:0007744" key="11">
    <source>
        <dbReference type="PDB" id="5J1P"/>
    </source>
</evidence>
<evidence type="ECO:0007829" key="12">
    <source>
        <dbReference type="PDB" id="5J1N"/>
    </source>
</evidence>
<organismHost>
    <name type="scientific">Homo sapiens</name>
    <name type="common">Human</name>
    <dbReference type="NCBI Taxonomy" id="9606"/>
</organismHost>
<organismHost>
    <name type="scientific">Mastomys natalensis</name>
    <name type="common">African soft-furred rat</name>
    <name type="synonym">Praomys natalensis</name>
    <dbReference type="NCBI Taxonomy" id="10112"/>
</organismHost>
<organismHost>
    <name type="scientific">Rattus</name>
    <dbReference type="NCBI Taxonomy" id="10114"/>
</organismHost>
<comment type="function">
    <text evidence="2">RNA-dependent RNA polymerase, which is responsible for the replication and transcription of the viral RNA genome using antigenomic RNA as an intermediate. During transcription, synthesizes subgenomic RNAs and assures their capping by a cap-snatching mechanism, which involves the endonuclease activity cleaving the host capped pre-mRNAs. These short capped RNAs are then used as primers for viral transcription. The 3'-end of subgenomic mRNAs molecules are heterogeneous and not polyadenylated. The replicase function is to direct synthesis of antigenomic and genomic RNA which are encapsidated and non capped. As a consequence of the use of the same enzyme for both transcription and replication, these mechanisms need to be well coordinated. These processes may be regulated by proteins N and Z in a dose-dependent manner. Z protein inhibits the viral polymerase L und thus the viral transcription and RNA synthesis.</text>
</comment>
<comment type="catalytic activity">
    <reaction evidence="2">
        <text>RNA(n) + a ribonucleoside 5'-triphosphate = RNA(n+1) + diphosphate</text>
        <dbReference type="Rhea" id="RHEA:21248"/>
        <dbReference type="Rhea" id="RHEA-COMP:14527"/>
        <dbReference type="Rhea" id="RHEA-COMP:17342"/>
        <dbReference type="ChEBI" id="CHEBI:33019"/>
        <dbReference type="ChEBI" id="CHEBI:61557"/>
        <dbReference type="ChEBI" id="CHEBI:140395"/>
        <dbReference type="EC" id="2.7.7.48"/>
    </reaction>
</comment>
<comment type="cofactor">
    <cofactor evidence="2 3">
        <name>Mn(2+)</name>
        <dbReference type="ChEBI" id="CHEBI:29035"/>
    </cofactor>
    <text evidence="2 3">For endonuclease activity. Binds 2 Mn(2+) ions in the active site. The divalent metal ions are crucial for catalytic activity (PubMed:27304209).</text>
</comment>
<comment type="cofactor">
    <cofactor evidence="1 2">
        <name>Mg(2+)</name>
        <dbReference type="ChEBI" id="CHEBI:18420"/>
    </cofactor>
    <cofactor evidence="1 2 3">
        <name>Mn(2+)</name>
        <dbReference type="ChEBI" id="CHEBI:29035"/>
    </cofactor>
    <text evidence="1 2">For polymerase activity.</text>
</comment>
<comment type="subunit">
    <text evidence="2">Homomultimer; the oligomeric structure is essential for the polymerase activity. Interacts with nucleoprotein N. Interacts with protein Z; this interaction inhibits viral transcription and replication, Z partially blocks the product exit tunnel for the releasing nascent RNA product.</text>
</comment>
<comment type="subcellular location">
    <subcellularLocation>
        <location evidence="2">Virion</location>
    </subcellularLocation>
    <subcellularLocation>
        <location evidence="2">Host cytoplasm</location>
    </subcellularLocation>
</comment>
<comment type="domain">
    <text evidence="2">The N-terminus contains the endonuclease activity (endoN). The central region contains the RdRp activity.</text>
</comment>
<comment type="miscellaneous">
    <text evidence="2 3">Classified as His(-) endonuclease since it does not have a histidine upstream of the active site that coordinates the first cation. His(-) endonucleases display very low activity in vitro, although they are clearly active in vivo.</text>
</comment>
<comment type="similarity">
    <text evidence="2">Belongs to the Bunyavirales RNA polymerase family.</text>
</comment>
<name>L_LASV</name>
<reference key="1">
    <citation type="submission" date="2004-05" db="EMBL/GenBank/DDBJ databases">
        <authorList>
            <person name="Hajjaj A."/>
            <person name="Chain P.S.G."/>
            <person name="Do L.H."/>
            <person name="Smith K.L."/>
            <person name="Imbro P.M."/>
            <person name="Malfatti S.A."/>
        </authorList>
    </citation>
    <scope>NUCLEOTIDE SEQUENCE [GENOMIC RNA]</scope>
    <source>
        <strain evidence="5">Macenta</strain>
    </source>
</reference>
<reference key="2">
    <citation type="submission" date="2004-05" db="EMBL/GenBank/DDBJ databases">
        <authorList>
            <person name="Jahrling P.B."/>
            <person name="Geisbert J."/>
            <person name="Ibrahim M.S."/>
        </authorList>
    </citation>
    <scope>NUCLEOTIDE SEQUENCE [GENOMIC RNA]</scope>
    <source>
        <strain evidence="5">Macenta</strain>
    </source>
</reference>
<reference key="3">
    <citation type="submission" date="2016-03" db="EMBL/GenBank/DDBJ databases">
        <authorList>
            <person name="Rossi S.L."/>
            <person name="Guerbois M."/>
            <person name="Forrester N.L."/>
            <person name="Ksiazek T."/>
            <person name="Lin D."/>
            <person name="Hari K."/>
            <person name="Weaver S.C."/>
        </authorList>
    </citation>
    <scope>NUCLEOTIDE SEQUENCE [GENOMIC RNA]</scope>
    <source>
        <strain evidence="6">GUINEA Z-185a</strain>
    </source>
</reference>
<reference key="4">
    <citation type="submission" date="2017-01" db="EMBL/GenBank/DDBJ databases">
        <authorList>
            <person name="Mah S.A."/>
            <person name="Swanson W.J."/>
            <person name="Moy G.W."/>
            <person name="Vacquier V.D."/>
        </authorList>
    </citation>
    <scope>NUCLEOTIDE SEQUENCE [GENOMIC RNA]</scope>
    <source>
        <strain evidence="8">IRF0185</strain>
        <strain evidence="7">IRF0194</strain>
    </source>
</reference>
<reference key="5">
    <citation type="journal article" date="2017" name="Crit. Rev. Microbiol.">
        <title>Bunyaviridae RdRps: structure, motifs, and RNA synthesis machinery.</title>
        <authorList>
            <person name="Amroun A."/>
            <person name="Priet S."/>
            <person name="de Lamballerie X."/>
            <person name="Querat G."/>
        </authorList>
    </citation>
    <scope>REVIEW</scope>
</reference>
<reference key="6">
    <citation type="journal article" date="2020" name="Trends Microbiol.">
        <title>The Cap-Snatching Mechanism of Bunyaviruses.</title>
        <authorList>
            <person name="Olschewski S."/>
            <person name="Cusack S."/>
            <person name="Rosenthal M."/>
        </authorList>
    </citation>
    <scope>REVIEW</scope>
</reference>
<reference evidence="9 10 11" key="7">
    <citation type="journal article" date="2016" name="PLoS Pathog.">
        <title>Comparative Structural and Functional Analysis of Bunyavirus and Arenavirus Cap-Snatching Endonucleases.</title>
        <authorList>
            <person name="Reguera J."/>
            <person name="Gerlach P."/>
            <person name="Rosenthal M."/>
            <person name="Gaudon S."/>
            <person name="Coscia F."/>
            <person name="Guenther S."/>
            <person name="Cusack S."/>
        </authorList>
    </citation>
    <scope>X-RAY CRYSTALLOGRAPHY (1.09 ANGSTROMS) OF 1-179 IN COMPLEX WITH MANGANESE</scope>
    <scope>CATALYTIC ACTIVITY</scope>
    <scope>COFACTOR</scope>
    <scope>MUTAGENESIS OF GLU-51; ASP-66; ASP-89; GLU-102 AND LYS-115</scope>
    <scope>ACTIVE SITE</scope>
</reference>
<keyword id="KW-0002">3D-structure</keyword>
<keyword id="KW-1157">Cap snatching</keyword>
<keyword id="KW-1035">Host cytoplasm</keyword>
<keyword id="KW-0378">Hydrolase</keyword>
<keyword id="KW-0460">Magnesium</keyword>
<keyword id="KW-0479">Metal-binding</keyword>
<keyword id="KW-0547">Nucleotide-binding</keyword>
<keyword id="KW-0548">Nucleotidyltransferase</keyword>
<keyword id="KW-0696">RNA-directed RNA polymerase</keyword>
<keyword id="KW-0808">Transferase</keyword>
<keyword id="KW-0693">Viral RNA replication</keyword>
<keyword id="KW-0946">Virion</keyword>
<organism>
    <name type="scientific">Mammarenavirus lassaense</name>
    <dbReference type="NCBI Taxonomy" id="3052310"/>
    <lineage>
        <taxon>Viruses</taxon>
        <taxon>Riboviria</taxon>
        <taxon>Orthornavirae</taxon>
        <taxon>Negarnaviricota</taxon>
        <taxon>Polyploviricotina</taxon>
        <taxon>Ellioviricetes</taxon>
        <taxon>Bunyavirales</taxon>
        <taxon>Arenaviridae</taxon>
        <taxon>Mammarenavirus</taxon>
    </lineage>
</organism>
<protein>
    <recommendedName>
        <fullName evidence="2">RNA-directed RNA polymerase L</fullName>
        <shortName evidence="2">Protein L</shortName>
        <ecNumber evidence="2">2.7.7.48</ecNumber>
    </recommendedName>
    <alternativeName>
        <fullName evidence="2">Large structural protein</fullName>
    </alternativeName>
    <alternativeName>
        <fullName evidence="2">Replicase</fullName>
    </alternativeName>
    <alternativeName>
        <fullName evidence="2">Transcriptase</fullName>
    </alternativeName>
    <domain>
        <recommendedName>
            <fullName evidence="2">cap-snatching endonuclease</fullName>
            <ecNumber evidence="2 3">3.1.-.-</ecNumber>
        </recommendedName>
    </domain>
</protein>
<proteinExistence type="evidence at protein level"/>
<feature type="chain" id="PRO_0000456061" description="RNA-directed RNA polymerase L">
    <location>
        <begin position="1"/>
        <end position="2219"/>
    </location>
</feature>
<feature type="domain" description="RdRp catalytic" evidence="2">
    <location>
        <begin position="1177"/>
        <end position="1373"/>
    </location>
</feature>
<feature type="region of interest" description="Endonuclease" evidence="2">
    <location>
        <begin position="26"/>
        <end position="289"/>
    </location>
</feature>
<feature type="active site" evidence="2 4">
    <location>
        <position position="115"/>
    </location>
</feature>
<feature type="binding site" evidence="2 3">
    <location>
        <position position="51"/>
    </location>
    <ligand>
        <name>Mn(2+)</name>
        <dbReference type="ChEBI" id="CHEBI:29035"/>
        <label>1</label>
    </ligand>
</feature>
<feature type="binding site" evidence="2 3">
    <location>
        <position position="89"/>
    </location>
    <ligand>
        <name>Mn(2+)</name>
        <dbReference type="ChEBI" id="CHEBI:29035"/>
        <label>1</label>
    </ligand>
</feature>
<feature type="binding site" evidence="2 3">
    <location>
        <position position="89"/>
    </location>
    <ligand>
        <name>Mn(2+)</name>
        <dbReference type="ChEBI" id="CHEBI:29035"/>
        <label>2</label>
    </ligand>
</feature>
<feature type="binding site" evidence="2 3">
    <location>
        <position position="102"/>
    </location>
    <ligand>
        <name>Mn(2+)</name>
        <dbReference type="ChEBI" id="CHEBI:29035"/>
        <label>1</label>
    </ligand>
</feature>
<feature type="binding site" evidence="2">
    <location>
        <position position="1335"/>
    </location>
    <ligand>
        <name>Mg(2+)</name>
        <dbReference type="ChEBI" id="CHEBI:18420"/>
        <note>catalytic; for RdRp activity</note>
    </ligand>
</feature>
<feature type="mutagenesis site" description="Loss of endonuclease stability." evidence="3">
    <original>E</original>
    <variation>A</variation>
    <location>
        <position position="51"/>
    </location>
</feature>
<feature type="mutagenesis site" description="No improvement of endonuclease activity in vitro." evidence="3">
    <original>E</original>
    <variation>H</variation>
    <location>
        <position position="51"/>
    </location>
</feature>
<feature type="mutagenesis site" description="No effect on endonuclease stability." evidence="3">
    <original>D</original>
    <variation>A</variation>
    <location>
        <position position="66"/>
    </location>
</feature>
<feature type="mutagenesis site" description="Complete loss of endonuclease stability. Complete loss of Mn(2+) binding." evidence="3">
    <original>D</original>
    <variation>A</variation>
    <location>
        <position position="89"/>
    </location>
</feature>
<feature type="mutagenesis site" description="Loss of endonuclease stability." evidence="3">
    <original>E</original>
    <variation>A</variation>
    <location>
        <position position="102"/>
    </location>
</feature>
<feature type="mutagenesis site" description="No effect on endonuclease stability." evidence="3">
    <original>K</original>
    <variation>A</variation>
    <location>
        <position position="115"/>
    </location>
</feature>
<feature type="helix" evidence="12">
    <location>
        <begin position="1"/>
        <end position="15"/>
    </location>
</feature>
<feature type="helix" evidence="12">
    <location>
        <begin position="20"/>
        <end position="30"/>
    </location>
</feature>
<feature type="helix" evidence="12">
    <location>
        <begin position="35"/>
        <end position="57"/>
    </location>
</feature>
<feature type="helix" evidence="12">
    <location>
        <begin position="69"/>
        <end position="74"/>
    </location>
</feature>
<feature type="turn" evidence="12">
    <location>
        <begin position="75"/>
        <end position="77"/>
    </location>
</feature>
<feature type="strand" evidence="12">
    <location>
        <begin position="89"/>
        <end position="94"/>
    </location>
</feature>
<feature type="strand" evidence="12">
    <location>
        <begin position="97"/>
        <end position="105"/>
    </location>
</feature>
<feature type="helix" evidence="12">
    <location>
        <begin position="109"/>
        <end position="124"/>
    </location>
</feature>
<feature type="helix" evidence="12">
    <location>
        <begin position="127"/>
        <end position="132"/>
    </location>
</feature>
<feature type="strand" evidence="12">
    <location>
        <begin position="136"/>
        <end position="145"/>
    </location>
</feature>
<feature type="helix" evidence="12">
    <location>
        <begin position="154"/>
        <end position="167"/>
    </location>
</feature>
<accession>Q6GWS6</accession>
<sequence length="2219" mass="254023">MEEDIACVKDLVSKYLADNERLSRQKLAFLVQTEPRMLLMEGLKLLSLCIEIDSCNANGCEHNSEDKSVERILHDHGILTPSLCFVVPDGYKLTGNVLILLECFVRSSPANFEQKYIEDFKKLEQLKEDLKTVNISLIPLIDGRTSFYNEQIPDWVNDKLRDTLFSLLRYAQESNSLFEESEYSRLCESLSMTSGRLSGVESLNVLLDNRSNHYEEVIASCHQGINNKLTAHEVKLQIEEEYQVFRNRLRKGEIESQFLKVEKSRLLNEFNDLYMDKVSTTEDDVEYLIHQFKRASPILRFLYANVGKEANEKSDQTIKECQMQYWRSFLNKVKSLRILNTRRKLLLIFDVLILLASKYDQMKYKSLRGWLGSCFISVNDRLVSLESTKRDLKKWVERRQQAEMSKTMQSSQCSNKNQILNSMLQKTILKATTALKDVGISVDQYKVDMEIMCPNCYDSVMDFDVSGITPTISYQRSEEEKFPYIMGSVELLETVDLERLSSLSLALVNSMKTSSTVKLRQNEFGPARYQVVRCREAYCQEFSLGDTEFQLVYQKTGECSKCYAINDNRVGEICSFYADPKRYFPAIFSAEVLQATVGTMISWIEDCSELEGQLHNIRSLTKMILVLILTHPSKRSQKLLQNLRYFIMAYVSDFYHKDLIDKIREELITDTEFLLYRLVRALMGLILSENVKSMMTNRFKFILNISYMCHFITKETPDRLTDQIKCFEKFLEPKVKFGHVSINPADIATEEELDDMIYNAKKFLNKDGCTSAKGPDYKRPGVSKKFLSLLTSSFNNGSLFKEKEVKKDIKDPLITSGCATALDLASNKSVVVNKYTDGSRVLNYDFNKLTALAVSQLTEVFSRKGKHLLNKQDYEYKVQQAMSNLVLGSRQHKTDADEADLDEILLDGGASVYFDQLRETVEKIVDQYREPVKPGSGPDDDGQPSVNDLDEVISNKFHIRLIKGELSNHMVEDFDHDVLPDKFYKEFCDAVYENDKLKERYFYCGHMSQCPIGELTKAVTTRTYFDHEYFQCFKSILLKMNANTLMGRYTHYKSRNLNFKFDMGKLSDDVRISERESNSEALSKALSLTNCTTAMLKNLCFYSQESPQSYNSVGPDTGRLKFSLSYKEQVGGNRELYIGDLRTKMFTRLIEDYFEALSLQLSGSCLNNEKEFENAILSMKLNVSLAHVSYSMDHSKWGPMMCPFLFLAVLQNLIFLSKDLQADIKGRDYLSTLLMWHMHKMVEIPFNVVSAMMKSFIKAQLGLRKKTTQSITEDFFYSSFQVGVVPSHVSSILDMGQGILHNTSDFYALISERFINYAISCICGGVVDAYTSSDDQISLFDQTLTELLQRDPDEFKTLMDFHYYMSDQLNKFVSPKSVIGRFVAEFKSRFFVWGDEVPLLTKFVAAALHNIKCKEPHQLAETIDTIIDQSVANGVPVHLCNLIQMRTLSLLQYARYPIDPFLLNCETDVRDWVDGNRSYRIMRQIEGLIPDACSKIRSMLRKLYNRLKTGQLHEEFTTNYLSSEHLSSLRNLCELLGVEPPSESDLEFSWLNLAAHHPLRMVLRQKIIYSGAVNLDDEKVPTIVKTIQNKLSSTFTRGAQKLLSEAINKSAFQSSIASGFVGLCRTLGSKCVRGPNKENLYIKSIQSLISGTQGIELLTNSYGVQYWRVPLNLRSENESVVSYFRPLLWDYMCISLSTAIELGAWVLGEPKMTKALEFFKHNPCDYFPLKPTASKLLEDRIGLNHIIHSLRRLYPSVFEKHILPFMSDLASTKMKWSPRIKFLDLCVALDVSCEALSLVSHIVKWKREEHYIVLSSELRLSHTRTHEPMVEERVVSTSDAVDNFMRQIYFESYVRPFVATTRTLGSFTWFPHKTSIPEGEGLQRLGPFSSFVEKVIHKGVERPMFKHDLMMGYAWIDFDIEPARLNQNQLIASGLVSTKFDSLEDFFDAVASLPSGSTRLSQTVRFRIKSQDASFKETFAIHLDYTGSMNQQTKYLVHDVTVMYSGAVNPCVLLDCWRLVMSGSTFKGKSAWYVDTEVINEFLIDTNQLGHVTPVEIVVDAEKLQFTEYDFVLVGPCTEPAPLVVHKGGLWECGKKLASFTPVIQDQDLEMFVKEVGDTSSDLLTEALSAMMLDRLGLKMQWSGVDIVSTLKAAVPQSMEILGAVLEAVDNWVEFKGYALCYSKSRRRIMVQSSGGKLRLKGRTCEELIERDEHIEDIE</sequence>
<dbReference type="EC" id="2.7.7.48" evidence="2"/>
<dbReference type="EC" id="3.1.-.-" evidence="2 3"/>
<dbReference type="EMBL" id="AY628200">
    <property type="protein sequence ID" value="AAT48998.1"/>
    <property type="molecule type" value="Genomic_RNA"/>
</dbReference>
<dbReference type="EMBL" id="KU978809">
    <property type="protein sequence ID" value="AMZ00375.1"/>
    <property type="molecule type" value="Genomic_RNA"/>
</dbReference>
<dbReference type="EMBL" id="KY425626">
    <property type="protein sequence ID" value="APT69523.1"/>
    <property type="molecule type" value="Genomic_RNA"/>
</dbReference>
<dbReference type="EMBL" id="KY425628">
    <property type="protein sequence ID" value="APT69533.1"/>
    <property type="molecule type" value="Genomic_RNA"/>
</dbReference>
<dbReference type="PDB" id="5IZH">
    <property type="method" value="X-ray"/>
    <property type="resolution" value="1.85 A"/>
    <property type="chains" value="A/B=1-170"/>
</dbReference>
<dbReference type="PDB" id="5J1N">
    <property type="method" value="X-ray"/>
    <property type="resolution" value="1.09 A"/>
    <property type="chains" value="A=1-174"/>
</dbReference>
<dbReference type="PDB" id="5J1P">
    <property type="method" value="X-ray"/>
    <property type="resolution" value="2.36 A"/>
    <property type="chains" value="A=1-174"/>
</dbReference>
<dbReference type="PDBsum" id="5IZH"/>
<dbReference type="PDBsum" id="5J1N"/>
<dbReference type="PDBsum" id="5J1P"/>
<dbReference type="SMR" id="Q6GWS6"/>
<dbReference type="Proteomes" id="UP000157272">
    <property type="component" value="Genome"/>
</dbReference>
<dbReference type="GO" id="GO:0030430">
    <property type="term" value="C:host cell cytoplasm"/>
    <property type="evidence" value="ECO:0007669"/>
    <property type="project" value="UniProtKB-SubCell"/>
</dbReference>
<dbReference type="GO" id="GO:0044423">
    <property type="term" value="C:virion component"/>
    <property type="evidence" value="ECO:0007669"/>
    <property type="project" value="UniProtKB-KW"/>
</dbReference>
<dbReference type="GO" id="GO:0016787">
    <property type="term" value="F:hydrolase activity"/>
    <property type="evidence" value="ECO:0007669"/>
    <property type="project" value="UniProtKB-KW"/>
</dbReference>
<dbReference type="GO" id="GO:0046872">
    <property type="term" value="F:metal ion binding"/>
    <property type="evidence" value="ECO:0007669"/>
    <property type="project" value="UniProtKB-KW"/>
</dbReference>
<dbReference type="GO" id="GO:0000166">
    <property type="term" value="F:nucleotide binding"/>
    <property type="evidence" value="ECO:0007669"/>
    <property type="project" value="UniProtKB-UniRule"/>
</dbReference>
<dbReference type="GO" id="GO:0003968">
    <property type="term" value="F:RNA-directed RNA polymerase activity"/>
    <property type="evidence" value="ECO:0007669"/>
    <property type="project" value="UniProtKB-UniRule"/>
</dbReference>
<dbReference type="GO" id="GO:0075526">
    <property type="term" value="P:cap snatching"/>
    <property type="evidence" value="ECO:0007669"/>
    <property type="project" value="UniProtKB-UniRule"/>
</dbReference>
<dbReference type="GO" id="GO:0039689">
    <property type="term" value="P:negative stranded viral RNA replication"/>
    <property type="evidence" value="ECO:0007669"/>
    <property type="project" value="UniProtKB-UniRule"/>
</dbReference>
<dbReference type="FunFam" id="3.30.70.2640:FF:000001">
    <property type="entry name" value="RNA-directed RNA polymerase L"/>
    <property type="match status" value="1"/>
</dbReference>
<dbReference type="Gene3D" id="3.30.70.2640">
    <property type="entry name" value="Arenavirus RNA polymerase"/>
    <property type="match status" value="1"/>
</dbReference>
<dbReference type="Gene3D" id="1.20.1440.300">
    <property type="entry name" value="RNA-directed RNA polymerase L, helical domain"/>
    <property type="match status" value="1"/>
</dbReference>
<dbReference type="HAMAP" id="MF_04086">
    <property type="entry name" value="ARENA_L"/>
    <property type="match status" value="1"/>
</dbReference>
<dbReference type="InterPro" id="IPR026382">
    <property type="entry name" value="CapSnatch_arenavir"/>
</dbReference>
<dbReference type="InterPro" id="IPR048006">
    <property type="entry name" value="CapSnatch_bunyavir"/>
</dbReference>
<dbReference type="InterPro" id="IPR007099">
    <property type="entry name" value="RNA-dir_pol_NSvirus"/>
</dbReference>
<dbReference type="InterPro" id="IPR010453">
    <property type="entry name" value="RNA_pol_arenavir"/>
</dbReference>
<dbReference type="NCBIfam" id="TIGR04202">
    <property type="entry name" value="capSnatchArena"/>
    <property type="match status" value="1"/>
</dbReference>
<dbReference type="Pfam" id="PF06317">
    <property type="entry name" value="Arena_RNA_pol"/>
    <property type="match status" value="1"/>
</dbReference>
<dbReference type="Pfam" id="PF17296">
    <property type="entry name" value="ArenaCapSnatch"/>
    <property type="match status" value="1"/>
</dbReference>
<dbReference type="PIRSF" id="PIRSF000836">
    <property type="entry name" value="L_ArenaV"/>
    <property type="match status" value="1"/>
</dbReference>
<dbReference type="PROSITE" id="PS00591">
    <property type="entry name" value="GH10_1"/>
    <property type="match status" value="1"/>
</dbReference>
<dbReference type="PROSITE" id="PS50525">
    <property type="entry name" value="RDRP_SSRNA_NEG_SEG"/>
    <property type="match status" value="1"/>
</dbReference>